<protein>
    <recommendedName>
        <fullName evidence="1">Large ribosomal subunit protein bL9</fullName>
    </recommendedName>
    <alternativeName>
        <fullName evidence="2">50S ribosomal protein L9</fullName>
    </alternativeName>
</protein>
<gene>
    <name evidence="1" type="primary">rplI</name>
    <name evidence="1" type="synonym">rpl9</name>
</gene>
<proteinExistence type="evidence at protein level"/>
<accession>P27151</accession>
<accession>Q9LCY9</accession>
<sequence length="148" mass="16396">MKVILLEPLENLGDVGQVVDVKPGYARNYLLPRGLAVLATESNLKALEARIRAQAKRLAERKAEAERLKKILENLTLTIPVRAGETKIYGSVTAKDIAEALSRQHGVTIDPKRLALEKPIKELGEYVLTYKPHPEVPIQLKVSVVAQE</sequence>
<dbReference type="EMBL" id="AF146075">
    <property type="protein sequence ID" value="AAF27298.1"/>
    <property type="molecule type" value="Genomic_DNA"/>
</dbReference>
<dbReference type="PIR" id="E48401">
    <property type="entry name" value="E48401"/>
</dbReference>
<dbReference type="SMR" id="P27151"/>
<dbReference type="GO" id="GO:1990904">
    <property type="term" value="C:ribonucleoprotein complex"/>
    <property type="evidence" value="ECO:0007669"/>
    <property type="project" value="UniProtKB-KW"/>
</dbReference>
<dbReference type="GO" id="GO:0005840">
    <property type="term" value="C:ribosome"/>
    <property type="evidence" value="ECO:0007669"/>
    <property type="project" value="UniProtKB-KW"/>
</dbReference>
<dbReference type="GO" id="GO:0019843">
    <property type="term" value="F:rRNA binding"/>
    <property type="evidence" value="ECO:0007669"/>
    <property type="project" value="UniProtKB-UniRule"/>
</dbReference>
<dbReference type="GO" id="GO:0003735">
    <property type="term" value="F:structural constituent of ribosome"/>
    <property type="evidence" value="ECO:0007669"/>
    <property type="project" value="InterPro"/>
</dbReference>
<dbReference type="GO" id="GO:0006412">
    <property type="term" value="P:translation"/>
    <property type="evidence" value="ECO:0007669"/>
    <property type="project" value="UniProtKB-UniRule"/>
</dbReference>
<dbReference type="FunFam" id="3.40.5.10:FF:000003">
    <property type="entry name" value="50S ribosomal protein L9"/>
    <property type="match status" value="1"/>
</dbReference>
<dbReference type="Gene3D" id="3.10.430.100">
    <property type="entry name" value="Ribosomal protein L9, C-terminal domain"/>
    <property type="match status" value="1"/>
</dbReference>
<dbReference type="Gene3D" id="3.40.5.10">
    <property type="entry name" value="Ribosomal protein L9, N-terminal domain"/>
    <property type="match status" value="1"/>
</dbReference>
<dbReference type="HAMAP" id="MF_00503">
    <property type="entry name" value="Ribosomal_bL9"/>
    <property type="match status" value="1"/>
</dbReference>
<dbReference type="InterPro" id="IPR000244">
    <property type="entry name" value="Ribosomal_bL9"/>
</dbReference>
<dbReference type="InterPro" id="IPR009027">
    <property type="entry name" value="Ribosomal_bL9/RNase_H1_N"/>
</dbReference>
<dbReference type="InterPro" id="IPR020594">
    <property type="entry name" value="Ribosomal_bL9_bac/chp"/>
</dbReference>
<dbReference type="InterPro" id="IPR020069">
    <property type="entry name" value="Ribosomal_bL9_C"/>
</dbReference>
<dbReference type="InterPro" id="IPR036791">
    <property type="entry name" value="Ribosomal_bL9_C_sf"/>
</dbReference>
<dbReference type="InterPro" id="IPR020070">
    <property type="entry name" value="Ribosomal_bL9_N"/>
</dbReference>
<dbReference type="InterPro" id="IPR036935">
    <property type="entry name" value="Ribosomal_bL9_N_sf"/>
</dbReference>
<dbReference type="NCBIfam" id="TIGR00158">
    <property type="entry name" value="L9"/>
    <property type="match status" value="1"/>
</dbReference>
<dbReference type="PANTHER" id="PTHR21368">
    <property type="entry name" value="50S RIBOSOMAL PROTEIN L9"/>
    <property type="match status" value="1"/>
</dbReference>
<dbReference type="Pfam" id="PF03948">
    <property type="entry name" value="Ribosomal_L9_C"/>
    <property type="match status" value="1"/>
</dbReference>
<dbReference type="Pfam" id="PF01281">
    <property type="entry name" value="Ribosomal_L9_N"/>
    <property type="match status" value="1"/>
</dbReference>
<dbReference type="SUPFAM" id="SSF55658">
    <property type="entry name" value="L9 N-domain-like"/>
    <property type="match status" value="1"/>
</dbReference>
<dbReference type="SUPFAM" id="SSF55653">
    <property type="entry name" value="Ribosomal protein L9 C-domain"/>
    <property type="match status" value="1"/>
</dbReference>
<dbReference type="PROSITE" id="PS00651">
    <property type="entry name" value="RIBOSOMAL_L9"/>
    <property type="match status" value="1"/>
</dbReference>
<comment type="function">
    <text evidence="1">Binds to the 23S rRNA.</text>
</comment>
<comment type="similarity">
    <text evidence="1">Belongs to the bacterial ribosomal protein bL9 family.</text>
</comment>
<name>RL9_THETH</name>
<feature type="chain" id="PRO_0000176697" description="Large ribosomal subunit protein bL9">
    <location>
        <begin position="1"/>
        <end position="148"/>
    </location>
</feature>
<feature type="sequence conflict" description="In Ref. 2; AA sequence." evidence="2" ref="2">
    <original>M</original>
    <variation>T</variation>
    <location>
        <position position="1"/>
    </location>
</feature>
<feature type="sequence conflict" description="In Ref. 2; AA sequence." evidence="2" ref="2">
    <original>D</original>
    <variation>C</variation>
    <location>
        <position position="20"/>
    </location>
</feature>
<feature type="sequence conflict" description="In Ref. 2; AA sequence." evidence="2" ref="2">
    <original>PGY</original>
    <variation>RGT</variation>
    <location>
        <begin position="23"/>
        <end position="25"/>
    </location>
</feature>
<feature type="sequence conflict" description="In Ref. 2; AA sequence." evidence="2" ref="2">
    <original>L</original>
    <variation>R</variation>
    <location>
        <position position="35"/>
    </location>
</feature>
<evidence type="ECO:0000255" key="1">
    <source>
        <dbReference type="HAMAP-Rule" id="MF_00503"/>
    </source>
</evidence>
<evidence type="ECO:0000305" key="2"/>
<organism>
    <name type="scientific">Thermus thermophilus</name>
    <dbReference type="NCBI Taxonomy" id="274"/>
    <lineage>
        <taxon>Bacteria</taxon>
        <taxon>Thermotogati</taxon>
        <taxon>Deinococcota</taxon>
        <taxon>Deinococci</taxon>
        <taxon>Thermales</taxon>
        <taxon>Thermaceae</taxon>
        <taxon>Thermus</taxon>
    </lineage>
</organism>
<reference key="1">
    <citation type="submission" date="1999-04" db="EMBL/GenBank/DDBJ databases">
        <title>Sequencing and analysis of the Thermus thermophilus gene cluster equivalent to the S6 operon.</title>
        <authorList>
            <person name="Shcherbakov D.V."/>
            <person name="Cherepanova E.A."/>
            <person name="Garber M.B."/>
        </authorList>
    </citation>
    <scope>NUCLEOTIDE SEQUENCE [GENOMIC DNA]</scope>
    <source>
        <strain>VK1</strain>
    </source>
</reference>
<reference key="2">
    <citation type="journal article" date="1992" name="Biochimie">
        <title>Ribosomal proteins from Thermus thermophilus for structural investigations.</title>
        <authorList>
            <person name="Garber M.B."/>
            <person name="Agalarov S.C."/>
            <person name="Eliseikina I.A."/>
            <person name="Fomenkova N.P."/>
            <person name="Nikonov S.V."/>
            <person name="Sedelnikova S.E."/>
            <person name="Shikaeva O.S."/>
            <person name="Vasiliev D."/>
            <person name="Zhdanov A.S."/>
            <person name="Liljas A."/>
            <person name="Svensson L.A."/>
        </authorList>
    </citation>
    <scope>PROTEIN SEQUENCE OF 1-35</scope>
    <source>
        <strain>VK1</strain>
    </source>
</reference>
<keyword id="KW-0903">Direct protein sequencing</keyword>
<keyword id="KW-0687">Ribonucleoprotein</keyword>
<keyword id="KW-0689">Ribosomal protein</keyword>
<keyword id="KW-0694">RNA-binding</keyword>
<keyword id="KW-0699">rRNA-binding</keyword>